<gene>
    <name evidence="1" type="primary">rplC</name>
    <name type="ordered locus">aq_009</name>
</gene>
<dbReference type="EMBL" id="AE000657">
    <property type="protein sequence ID" value="AAC06393.1"/>
    <property type="molecule type" value="Genomic_DNA"/>
</dbReference>
<dbReference type="PIR" id="D70300">
    <property type="entry name" value="D70300"/>
</dbReference>
<dbReference type="RefSeq" id="NP_212989.1">
    <property type="nucleotide sequence ID" value="NC_000918.1"/>
</dbReference>
<dbReference type="RefSeq" id="WP_010879927.1">
    <property type="nucleotide sequence ID" value="NC_000918.1"/>
</dbReference>
<dbReference type="SMR" id="O66431"/>
<dbReference type="FunCoup" id="O66431">
    <property type="interactions" value="514"/>
</dbReference>
<dbReference type="STRING" id="224324.aq_009"/>
<dbReference type="EnsemblBacteria" id="AAC06393">
    <property type="protein sequence ID" value="AAC06393"/>
    <property type="gene ID" value="aq_009"/>
</dbReference>
<dbReference type="KEGG" id="aae:aq_009"/>
<dbReference type="PATRIC" id="fig|224324.8.peg.4"/>
<dbReference type="eggNOG" id="COG0087">
    <property type="taxonomic scope" value="Bacteria"/>
</dbReference>
<dbReference type="HOGENOM" id="CLU_044142_4_1_0"/>
<dbReference type="InParanoid" id="O66431"/>
<dbReference type="OrthoDB" id="9806135at2"/>
<dbReference type="Proteomes" id="UP000000798">
    <property type="component" value="Chromosome"/>
</dbReference>
<dbReference type="GO" id="GO:0022625">
    <property type="term" value="C:cytosolic large ribosomal subunit"/>
    <property type="evidence" value="ECO:0000318"/>
    <property type="project" value="GO_Central"/>
</dbReference>
<dbReference type="GO" id="GO:0019843">
    <property type="term" value="F:rRNA binding"/>
    <property type="evidence" value="ECO:0007669"/>
    <property type="project" value="UniProtKB-UniRule"/>
</dbReference>
<dbReference type="GO" id="GO:0003735">
    <property type="term" value="F:structural constituent of ribosome"/>
    <property type="evidence" value="ECO:0000318"/>
    <property type="project" value="GO_Central"/>
</dbReference>
<dbReference type="GO" id="GO:0006412">
    <property type="term" value="P:translation"/>
    <property type="evidence" value="ECO:0007669"/>
    <property type="project" value="UniProtKB-UniRule"/>
</dbReference>
<dbReference type="FunFam" id="2.40.30.10:FF:000004">
    <property type="entry name" value="50S ribosomal protein L3"/>
    <property type="match status" value="1"/>
</dbReference>
<dbReference type="FunFam" id="3.30.160.810:FF:000001">
    <property type="entry name" value="50S ribosomal protein L3"/>
    <property type="match status" value="1"/>
</dbReference>
<dbReference type="Gene3D" id="3.30.160.810">
    <property type="match status" value="1"/>
</dbReference>
<dbReference type="Gene3D" id="2.40.30.10">
    <property type="entry name" value="Translation factors"/>
    <property type="match status" value="1"/>
</dbReference>
<dbReference type="HAMAP" id="MF_01325_B">
    <property type="entry name" value="Ribosomal_uL3_B"/>
    <property type="match status" value="1"/>
</dbReference>
<dbReference type="InterPro" id="IPR000597">
    <property type="entry name" value="Ribosomal_uL3"/>
</dbReference>
<dbReference type="InterPro" id="IPR019927">
    <property type="entry name" value="Ribosomal_uL3_bac/org-type"/>
</dbReference>
<dbReference type="InterPro" id="IPR019926">
    <property type="entry name" value="Ribosomal_uL3_CS"/>
</dbReference>
<dbReference type="InterPro" id="IPR009000">
    <property type="entry name" value="Transl_B-barrel_sf"/>
</dbReference>
<dbReference type="NCBIfam" id="TIGR03625">
    <property type="entry name" value="L3_bact"/>
    <property type="match status" value="1"/>
</dbReference>
<dbReference type="PANTHER" id="PTHR11229">
    <property type="entry name" value="50S RIBOSOMAL PROTEIN L3"/>
    <property type="match status" value="1"/>
</dbReference>
<dbReference type="PANTHER" id="PTHR11229:SF16">
    <property type="entry name" value="LARGE RIBOSOMAL SUBUNIT PROTEIN UL3C"/>
    <property type="match status" value="1"/>
</dbReference>
<dbReference type="Pfam" id="PF00297">
    <property type="entry name" value="Ribosomal_L3"/>
    <property type="match status" value="1"/>
</dbReference>
<dbReference type="SUPFAM" id="SSF50447">
    <property type="entry name" value="Translation proteins"/>
    <property type="match status" value="1"/>
</dbReference>
<dbReference type="PROSITE" id="PS00474">
    <property type="entry name" value="RIBOSOMAL_L3"/>
    <property type="match status" value="1"/>
</dbReference>
<feature type="chain" id="PRO_0000077060" description="Large ribosomal subunit protein uL3">
    <location>
        <begin position="1"/>
        <end position="241"/>
    </location>
</feature>
<proteinExistence type="inferred from homology"/>
<protein>
    <recommendedName>
        <fullName evidence="1">Large ribosomal subunit protein uL3</fullName>
    </recommendedName>
    <alternativeName>
        <fullName evidence="2">50S ribosomal protein L3</fullName>
    </alternativeName>
</protein>
<keyword id="KW-1185">Reference proteome</keyword>
<keyword id="KW-0687">Ribonucleoprotein</keyword>
<keyword id="KW-0689">Ribosomal protein</keyword>
<keyword id="KW-0694">RNA-binding</keyword>
<keyword id="KW-0699">rRNA-binding</keyword>
<organism>
    <name type="scientific">Aquifex aeolicus (strain VF5)</name>
    <dbReference type="NCBI Taxonomy" id="224324"/>
    <lineage>
        <taxon>Bacteria</taxon>
        <taxon>Pseudomonadati</taxon>
        <taxon>Aquificota</taxon>
        <taxon>Aquificia</taxon>
        <taxon>Aquificales</taxon>
        <taxon>Aquificaceae</taxon>
        <taxon>Aquifex</taxon>
    </lineage>
</organism>
<reference key="1">
    <citation type="journal article" date="1998" name="Nature">
        <title>The complete genome of the hyperthermophilic bacterium Aquifex aeolicus.</title>
        <authorList>
            <person name="Deckert G."/>
            <person name="Warren P.V."/>
            <person name="Gaasterland T."/>
            <person name="Young W.G."/>
            <person name="Lenox A.L."/>
            <person name="Graham D.E."/>
            <person name="Overbeek R."/>
            <person name="Snead M.A."/>
            <person name="Keller M."/>
            <person name="Aujay M."/>
            <person name="Huber R."/>
            <person name="Feldman R.A."/>
            <person name="Short J.M."/>
            <person name="Olsen G.J."/>
            <person name="Swanson R.V."/>
        </authorList>
    </citation>
    <scope>NUCLEOTIDE SEQUENCE [LARGE SCALE GENOMIC DNA]</scope>
    <source>
        <strain>VF5</strain>
    </source>
</reference>
<evidence type="ECO:0000255" key="1">
    <source>
        <dbReference type="HAMAP-Rule" id="MF_01325"/>
    </source>
</evidence>
<evidence type="ECO:0000305" key="2"/>
<comment type="function">
    <text evidence="1">One of the primary rRNA binding proteins, it binds directly near the 3'-end of the 23S rRNA, where it nucleates assembly of the 50S subunit.</text>
</comment>
<comment type="subunit">
    <text evidence="1">Part of the 50S ribosomal subunit. Forms a cluster with proteins L14 and L19.</text>
</comment>
<comment type="similarity">
    <text evidence="1">Belongs to the universal ribosomal protein uL3 family.</text>
</comment>
<name>RL3_AQUAE</name>
<sequence>MPLGLIGEKVGMTRVLLKDGTAIPVTVIKFPVNYVVQVKSQNTKDGYNALQIGAYEAKEKHLTKPLIGHFKKHGVPLLRRLWEFRVDNPEEFQSGQQLKVEDVFKPGDLVDVWGISKGRGFAGAMKRWDFAGFPKSHGHRYHRAVGAIGQRTDPGRVWKGKRMPGHYGAKPVRVQGLFVVDVLPEENAILVKGSVPGHNKGIVVVEQSTIAYRKSQKLKQKRYQFIIENLAKEESQEVAES</sequence>
<accession>O66431</accession>